<accession>P61511</accession>
<accession>P27270</accession>
<sequence>MWDPLLNEFPDSVHGLRCMLAIKYLQLVEETYEPNTLGHDLIRDLISVIRARDYAEANRRYTNFNARLEGSSKTELRQPVYQPCCCPHCPRHQASIMDLQAHVSKAADVQNVQKP</sequence>
<feature type="chain" id="PRO_0000222279" description="Protein V2">
    <location>
        <begin position="1"/>
        <end position="115"/>
    </location>
</feature>
<comment type="function">
    <text evidence="1">Through its interaction with host SGS3, acts as a suppressor of RNA-mediated gene silencing, also known as post-transcriptional gene silencing (PTGS), a mechanism of plant viral defense that limits the accumulation of viral RNAs.</text>
</comment>
<comment type="subunit">
    <text evidence="1">Interacts with host SGS3.</text>
</comment>
<comment type="subcellular location">
    <subcellularLocation>
        <location evidence="1">Host cytoplasm</location>
        <location evidence="1">Host perinuclear region</location>
    </subcellularLocation>
    <text evidence="1">Accumulates in inclusion bodies in the cell periphery. May interact with the ER network from the perinuclear region out to the cell periphery (By similarity).</text>
</comment>
<comment type="similarity">
    <text evidence="2">Belongs to the geminiviridae protein AV2/V2 family.</text>
</comment>
<organism>
    <name type="scientific">Tomato yellow leaf curl Sardinia virus</name>
    <name type="common">TYLCSV</name>
    <dbReference type="NCBI Taxonomy" id="123735"/>
    <lineage>
        <taxon>Viruses</taxon>
        <taxon>Monodnaviria</taxon>
        <taxon>Shotokuvirae</taxon>
        <taxon>Cressdnaviricota</taxon>
        <taxon>Repensiviricetes</taxon>
        <taxon>Geplafuvirales</taxon>
        <taxon>Geminiviridae</taxon>
        <taxon>Begomovirus</taxon>
    </lineage>
</organism>
<proteinExistence type="inferred from homology"/>
<reference key="1">
    <citation type="journal article" date="1991" name="Nucleic Acids Res.">
        <title>Tomato yellow leaf curl virus from Sardinia is a whitefly-transmitted monopartite geminivirus.</title>
        <authorList>
            <person name="Kheyr-Pour A."/>
            <person name="Bendahmane M."/>
            <person name="Matzeit V."/>
            <person name="Accotto G.P."/>
            <person name="Crespi S."/>
            <person name="Gronenborn B."/>
        </authorList>
    </citation>
    <scope>NUCLEOTIDE SEQUENCE [GENOMIC DNA]</scope>
</reference>
<evidence type="ECO:0000250" key="1"/>
<evidence type="ECO:0000305" key="2"/>
<dbReference type="EMBL" id="X61153">
    <property type="protein sequence ID" value="CAA43462.1"/>
    <property type="molecule type" value="Genomic_DNA"/>
</dbReference>
<dbReference type="PIR" id="S22588">
    <property type="entry name" value="S22588"/>
</dbReference>
<dbReference type="RefSeq" id="NP_620737.1">
    <property type="nucleotide sequence ID" value="NC_003828.1"/>
</dbReference>
<dbReference type="GeneID" id="944420"/>
<dbReference type="KEGG" id="vg:944420"/>
<dbReference type="OrthoDB" id="14447at10239"/>
<dbReference type="Proteomes" id="UP000002323">
    <property type="component" value="Genome"/>
</dbReference>
<dbReference type="GO" id="GO:0044220">
    <property type="term" value="C:host cell perinuclear region of cytoplasm"/>
    <property type="evidence" value="ECO:0007669"/>
    <property type="project" value="UniProtKB-SubCell"/>
</dbReference>
<dbReference type="GO" id="GO:0060967">
    <property type="term" value="P:negative regulation of gene silencing by regulatory ncRNA"/>
    <property type="evidence" value="ECO:0007669"/>
    <property type="project" value="InterPro"/>
</dbReference>
<dbReference type="GO" id="GO:0052170">
    <property type="term" value="P:symbiont-mediated suppression of host innate immune response"/>
    <property type="evidence" value="ECO:0007669"/>
    <property type="project" value="UniProtKB-KW"/>
</dbReference>
<dbReference type="InterPro" id="IPR002511">
    <property type="entry name" value="Gemini_V2"/>
</dbReference>
<dbReference type="InterPro" id="IPR005159">
    <property type="entry name" value="WCCH"/>
</dbReference>
<dbReference type="Pfam" id="PF01524">
    <property type="entry name" value="Gemini_V2"/>
    <property type="match status" value="1"/>
</dbReference>
<dbReference type="Pfam" id="PF03716">
    <property type="entry name" value="WCCH"/>
    <property type="match status" value="1"/>
</dbReference>
<keyword id="KW-1035">Host cytoplasm</keyword>
<keyword id="KW-0945">Host-virus interaction</keyword>
<keyword id="KW-1090">Inhibition of host innate immune response by virus</keyword>
<keyword id="KW-1185">Reference proteome</keyword>
<keyword id="KW-0941">Suppressor of RNA silencing</keyword>
<keyword id="KW-0899">Viral immunoevasion</keyword>
<organismHost>
    <name type="scientific">Capsicum annuum</name>
    <name type="common">Capsicum pepper</name>
    <dbReference type="NCBI Taxonomy" id="4072"/>
</organismHost>
<organismHost>
    <name type="scientific">Cynanchum acutum</name>
    <dbReference type="NCBI Taxonomy" id="185024"/>
</organismHost>
<organismHost>
    <name type="scientific">Malva parviflora</name>
    <name type="common">Little mallow</name>
    <name type="synonym">Cheeseweed mallow</name>
    <dbReference type="NCBI Taxonomy" id="145753"/>
</organismHost>
<organismHost>
    <name type="scientific">Sinapis arvensis</name>
    <dbReference type="NCBI Taxonomy" id="29728"/>
</organismHost>
<organismHost>
    <name type="scientific">Solanum lycopersicum</name>
    <name type="common">Tomato</name>
    <name type="synonym">Lycopersicon esculentum</name>
    <dbReference type="NCBI Taxonomy" id="4081"/>
</organismHost>
<organismHost>
    <name type="scientific">Solanum nigrum</name>
    <name type="common">Black nightshade</name>
    <dbReference type="NCBI Taxonomy" id="4112"/>
</organismHost>
<protein>
    <recommendedName>
        <fullName>Protein V2</fullName>
    </recommendedName>
</protein>
<gene>
    <name type="ORF">V2</name>
</gene>
<name>AV2_TYCSV</name>